<name>DHYS2_ARCFU</name>
<protein>
    <recommendedName>
        <fullName>Probable deoxyhypusine synthase 2</fullName>
        <shortName>DHS 2</shortName>
        <ecNumber>2.5.1.46</ecNumber>
    </recommendedName>
</protein>
<organism>
    <name type="scientific">Archaeoglobus fulgidus (strain ATCC 49558 / DSM 4304 / JCM 9628 / NBRC 100126 / VC-16)</name>
    <dbReference type="NCBI Taxonomy" id="224325"/>
    <lineage>
        <taxon>Archaea</taxon>
        <taxon>Methanobacteriati</taxon>
        <taxon>Methanobacteriota</taxon>
        <taxon>Archaeoglobi</taxon>
        <taxon>Archaeoglobales</taxon>
        <taxon>Archaeoglobaceae</taxon>
        <taxon>Archaeoglobus</taxon>
    </lineage>
</organism>
<gene>
    <name type="primary">dys2</name>
    <name type="ordered locus">AF_2300</name>
</gene>
<comment type="function">
    <text evidence="1">Catalyzes the NAD-dependent oxidative cleavage of spermidine and the subsequent transfer of the butylamine moiety of spermidine to the epsilon-amino group of a specific lysine residue of the eIF-5A precursor protein to form the intermediate deoxyhypusine residue.</text>
</comment>
<comment type="catalytic activity">
    <reaction>
        <text>[eIF5A protein]-L-lysine + spermidine = [eIF5A protein]-deoxyhypusine + propane-1,3-diamine</text>
        <dbReference type="Rhea" id="RHEA:33299"/>
        <dbReference type="Rhea" id="RHEA-COMP:10143"/>
        <dbReference type="Rhea" id="RHEA-COMP:10144"/>
        <dbReference type="ChEBI" id="CHEBI:29969"/>
        <dbReference type="ChEBI" id="CHEBI:57484"/>
        <dbReference type="ChEBI" id="CHEBI:57834"/>
        <dbReference type="ChEBI" id="CHEBI:82657"/>
        <dbReference type="EC" id="2.5.1.46"/>
    </reaction>
</comment>
<comment type="cofactor">
    <cofactor evidence="1">
        <name>NAD(+)</name>
        <dbReference type="ChEBI" id="CHEBI:57540"/>
    </cofactor>
</comment>
<comment type="pathway">
    <text>Protein modification; eIF5A hypusination.</text>
</comment>
<comment type="similarity">
    <text evidence="2">Belongs to the deoxyhypusine synthase family.</text>
</comment>
<accession>O27984</accession>
<sequence length="298" mass="33015">MARTGFQGRKLGEAFEIWTEMLREENITILMGLSGAMVPAGMRKIIAWLIRNRYIDVLVSTGANLFHDIHEAMGFRHFMGSEHVNDCKLFEEGIDRIHDVFAYEKEFNVIDYTLAEIISEMSGVMSSREFLEEIAGRLNVKDRNSIVIAAYESKVPIFSPAIADSSIGIAAALAKREVVIDTIRDVEELTEIVVNSEKTGVIYVGGGVPKNFIQQTEVVARLKGYDVRGHEYAIQITTDVPQFGGLSGCTFEEGVSWGKISGKAKKVQVNCDATIALPVLAHGLIGIRRQKYPIFNGL</sequence>
<keyword id="KW-0386">Hypusine biosynthesis</keyword>
<keyword id="KW-0520">NAD</keyword>
<keyword id="KW-1185">Reference proteome</keyword>
<keyword id="KW-0808">Transferase</keyword>
<dbReference type="EC" id="2.5.1.46"/>
<dbReference type="EMBL" id="AE000782">
    <property type="protein sequence ID" value="AAB88953.1"/>
    <property type="molecule type" value="Genomic_DNA"/>
</dbReference>
<dbReference type="PIR" id="D69537">
    <property type="entry name" value="D69537"/>
</dbReference>
<dbReference type="RefSeq" id="WP_010879789.1">
    <property type="nucleotide sequence ID" value="NC_000917.1"/>
</dbReference>
<dbReference type="SMR" id="O27984"/>
<dbReference type="STRING" id="224325.AF_2300"/>
<dbReference type="PaxDb" id="224325-AF_2300"/>
<dbReference type="EnsemblBacteria" id="AAB88953">
    <property type="protein sequence ID" value="AAB88953"/>
    <property type="gene ID" value="AF_2300"/>
</dbReference>
<dbReference type="GeneID" id="1485532"/>
<dbReference type="KEGG" id="afu:AF_2300"/>
<dbReference type="eggNOG" id="arCOG04142">
    <property type="taxonomic scope" value="Archaea"/>
</dbReference>
<dbReference type="HOGENOM" id="CLU_039781_1_0_2"/>
<dbReference type="OrthoDB" id="17730at2157"/>
<dbReference type="PhylomeDB" id="O27984"/>
<dbReference type="UniPathway" id="UPA00354"/>
<dbReference type="Proteomes" id="UP000002199">
    <property type="component" value="Chromosome"/>
</dbReference>
<dbReference type="GO" id="GO:0005737">
    <property type="term" value="C:cytoplasm"/>
    <property type="evidence" value="ECO:0007669"/>
    <property type="project" value="TreeGrafter"/>
</dbReference>
<dbReference type="GO" id="GO:0034038">
    <property type="term" value="F:deoxyhypusine synthase activity"/>
    <property type="evidence" value="ECO:0007669"/>
    <property type="project" value="UniProtKB-UniRule"/>
</dbReference>
<dbReference type="Gene3D" id="3.40.910.10">
    <property type="entry name" value="Deoxyhypusine synthase"/>
    <property type="match status" value="1"/>
</dbReference>
<dbReference type="HAMAP" id="MF_00153">
    <property type="entry name" value="DHS"/>
    <property type="match status" value="1"/>
</dbReference>
<dbReference type="InterPro" id="IPR022899">
    <property type="entry name" value="Deoxyhypus_synthase_arc"/>
</dbReference>
<dbReference type="InterPro" id="IPR002773">
    <property type="entry name" value="Deoxyhypusine_synthase"/>
</dbReference>
<dbReference type="InterPro" id="IPR036982">
    <property type="entry name" value="Deoxyhypusine_synthase_sf"/>
</dbReference>
<dbReference type="InterPro" id="IPR029035">
    <property type="entry name" value="DHS-like_NAD/FAD-binding_dom"/>
</dbReference>
<dbReference type="NCBIfam" id="TIGR00321">
    <property type="entry name" value="dhys"/>
    <property type="match status" value="1"/>
</dbReference>
<dbReference type="NCBIfam" id="NF002006">
    <property type="entry name" value="PRK00805.1"/>
    <property type="match status" value="1"/>
</dbReference>
<dbReference type="PANTHER" id="PTHR11703">
    <property type="entry name" value="DEOXYHYPUSINE SYNTHASE"/>
    <property type="match status" value="1"/>
</dbReference>
<dbReference type="PANTHER" id="PTHR11703:SF2">
    <property type="entry name" value="DEOXYHYPUSINE SYNTHASE-LIKE PROTEIN"/>
    <property type="match status" value="1"/>
</dbReference>
<dbReference type="Pfam" id="PF01916">
    <property type="entry name" value="DS"/>
    <property type="match status" value="1"/>
</dbReference>
<dbReference type="SUPFAM" id="SSF52467">
    <property type="entry name" value="DHS-like NAD/FAD-binding domain"/>
    <property type="match status" value="1"/>
</dbReference>
<evidence type="ECO:0000250" key="1"/>
<evidence type="ECO:0000305" key="2"/>
<feature type="chain" id="PRO_0000134491" description="Probable deoxyhypusine synthase 2">
    <location>
        <begin position="1"/>
        <end position="298"/>
    </location>
</feature>
<feature type="active site" description="Nucleophile" evidence="1">
    <location>
        <position position="259"/>
    </location>
</feature>
<reference key="1">
    <citation type="journal article" date="1997" name="Nature">
        <title>The complete genome sequence of the hyperthermophilic, sulphate-reducing archaeon Archaeoglobus fulgidus.</title>
        <authorList>
            <person name="Klenk H.-P."/>
            <person name="Clayton R.A."/>
            <person name="Tomb J.-F."/>
            <person name="White O."/>
            <person name="Nelson K.E."/>
            <person name="Ketchum K.A."/>
            <person name="Dodson R.J."/>
            <person name="Gwinn M.L."/>
            <person name="Hickey E.K."/>
            <person name="Peterson J.D."/>
            <person name="Richardson D.L."/>
            <person name="Kerlavage A.R."/>
            <person name="Graham D.E."/>
            <person name="Kyrpides N.C."/>
            <person name="Fleischmann R.D."/>
            <person name="Quackenbush J."/>
            <person name="Lee N.H."/>
            <person name="Sutton G.G."/>
            <person name="Gill S.R."/>
            <person name="Kirkness E.F."/>
            <person name="Dougherty B.A."/>
            <person name="McKenney K."/>
            <person name="Adams M.D."/>
            <person name="Loftus B.J."/>
            <person name="Peterson S.N."/>
            <person name="Reich C.I."/>
            <person name="McNeil L.K."/>
            <person name="Badger J.H."/>
            <person name="Glodek A."/>
            <person name="Zhou L."/>
            <person name="Overbeek R."/>
            <person name="Gocayne J.D."/>
            <person name="Weidman J.F."/>
            <person name="McDonald L.A."/>
            <person name="Utterback T.R."/>
            <person name="Cotton M.D."/>
            <person name="Spriggs T."/>
            <person name="Artiach P."/>
            <person name="Kaine B.P."/>
            <person name="Sykes S.M."/>
            <person name="Sadow P.W."/>
            <person name="D'Andrea K.P."/>
            <person name="Bowman C."/>
            <person name="Fujii C."/>
            <person name="Garland S.A."/>
            <person name="Mason T.M."/>
            <person name="Olsen G.J."/>
            <person name="Fraser C.M."/>
            <person name="Smith H.O."/>
            <person name="Woese C.R."/>
            <person name="Venter J.C."/>
        </authorList>
    </citation>
    <scope>NUCLEOTIDE SEQUENCE [LARGE SCALE GENOMIC DNA]</scope>
    <source>
        <strain>ATCC 49558 / DSM 4304 / JCM 9628 / NBRC 100126 / VC-16</strain>
    </source>
</reference>
<proteinExistence type="inferred from homology"/>